<keyword id="KW-0007">Acetylation</keyword>
<keyword id="KW-0966">Cell projection</keyword>
<keyword id="KW-0968">Cytoplasmic vesicle</keyword>
<keyword id="KW-0256">Endoplasmic reticulum</keyword>
<keyword id="KW-0967">Endosome</keyword>
<keyword id="KW-0333">Golgi apparatus</keyword>
<keyword id="KW-0342">GTP-binding</keyword>
<keyword id="KW-0378">Hydrolase</keyword>
<keyword id="KW-0449">Lipoprotein</keyword>
<keyword id="KW-0460">Magnesium</keyword>
<keyword id="KW-0472">Membrane</keyword>
<keyword id="KW-0479">Metal-binding</keyword>
<keyword id="KW-0488">Methylation</keyword>
<keyword id="KW-0547">Nucleotide-binding</keyword>
<keyword id="KW-0636">Prenylation</keyword>
<keyword id="KW-0653">Protein transport</keyword>
<keyword id="KW-1185">Reference proteome</keyword>
<keyword id="KW-0813">Transport</keyword>
<comment type="function">
    <text evidence="3 4 5">The small GTPases Rab are key regulators of intracellular membrane trafficking, from the formation of transport vesicles to their fusion with membranes. Rabs cycle between an inactive GDP-bound form and an active GTP-bound form that is able to recruit to membranes different sets of downstream effectors directly responsible for vesicle formation, movement, tethering and fusion (By similarity). RAB21 is involved in membrane trafficking control (By similarity). Regulates integrin internalization and recycling, but does not influence the traffic of endosomally translocated receptors in general (By similarity). As a result, may regulate cell adhesion and migration (By similarity). During the mitosis of adherent cells, controls the endosomal trafficking of integrins which is required for the successful completion of cytokinesis (By similarity). Involved in neurite growth (By similarity). Following SBF2/MTMT13-mediated activation in response to starvation-induced autophagy, binds to and regulates SNARE protein VAMP8 endolysosomal transport required for SNARE-mediated autophagosome-lysosome fusion (By similarity). Modulates protein levels of the cargo receptors TMED2 and TMED10, and required for appropriate Golgi localization of TMED10 (By similarity).</text>
</comment>
<comment type="catalytic activity">
    <reaction evidence="2">
        <text>GTP + H2O = GDP + phosphate + H(+)</text>
        <dbReference type="Rhea" id="RHEA:19669"/>
        <dbReference type="ChEBI" id="CHEBI:15377"/>
        <dbReference type="ChEBI" id="CHEBI:15378"/>
        <dbReference type="ChEBI" id="CHEBI:37565"/>
        <dbReference type="ChEBI" id="CHEBI:43474"/>
        <dbReference type="ChEBI" id="CHEBI:58189"/>
        <dbReference type="EC" id="3.6.5.2"/>
    </reaction>
    <physiologicalReaction direction="left-to-right" evidence="2">
        <dbReference type="Rhea" id="RHEA:19670"/>
    </physiologicalReaction>
</comment>
<comment type="cofactor">
    <cofactor evidence="5">
        <name>Mg(2+)</name>
        <dbReference type="ChEBI" id="CHEBI:18420"/>
    </cofactor>
</comment>
<comment type="activity regulation">
    <text evidence="5 7">Regulated by guanine nucleotide exchange factors (GEFs) including ANKRD27 and RABGEF1, which promote the exchange of bound GDP for free GTP (By similarity). Regulated by GTPase activating proteins (GAPs) which increase the GTP hydrolysis activity. Inhibited by GDP dissociation inhibitors (GDIs) (Probable).</text>
</comment>
<comment type="subunit">
    <text evidence="3 5">Interacts with the cytoplasmic tail of integrins ITGA1, ITGA2, ITGA5, ITGA6, ITGA11 and ITGB1; this interaction is dependent upon its GDP/GTP cycle (By similarity). Interacts with RABGEF1 (via VPS9 domain) (By similarity). Interacts with ANKRD27 (By similarity). Interacts (in GTP-bound form) with VAMP8 in response to starvation; the interaction probably regulates VAMP8 endolysosomal trafficking (By similarity). Interacts (active GTP-bound form) with TMED10; the interaction is indirect and regulates TMED10 abundance and localization at the Golgi (By similarity).</text>
</comment>
<comment type="subcellular location">
    <subcellularLocation>
        <location evidence="5">Endoplasmic reticulum membrane</location>
        <topology evidence="7">Lipid-anchor</topology>
    </subcellularLocation>
    <subcellularLocation>
        <location evidence="5">Golgi apparatus</location>
        <location evidence="5">trans-Golgi network</location>
    </subcellularLocation>
    <subcellularLocation>
        <location evidence="5">Golgi apparatus membrane</location>
    </subcellularLocation>
    <subcellularLocation>
        <location evidence="5">Early endosome membrane</location>
    </subcellularLocation>
    <subcellularLocation>
        <location evidence="5">Cytoplasmic vesicle membrane</location>
    </subcellularLocation>
    <subcellularLocation>
        <location evidence="5">Cleavage furrow</location>
    </subcellularLocation>
    <subcellularLocation>
        <location evidence="3">Cell projection</location>
        <location evidence="3">Neuron projection</location>
    </subcellularLocation>
    <text evidence="3 5">Colocalizes with ANKRD27 and VAMP7 in neurites (By similarity). In nonpolarized epithelial Caco-2 cells, found in the endoplasmic reticulum; in polarized cells, observed in vesicles in the apical cytoplasm. During mitosis, in mid-telophase, localized in the ingressing cleavage furrow. In late telophase, detected at the opposite poles of the daughter cells, in vesicles at the base of lamellipodia formed by the separating daughter cells (By similarity).</text>
</comment>
<comment type="domain">
    <text evidence="2">Switch 1, switch 2 and the interswitch regions are characteristic of Rab GTPases and mediate the interactions with Rab downstream effectors. The switch regions undergo conformational changes upon nucleotide binding which drive interaction with specific sets of effector proteins, with most effectors only binding to GTP-bound Rab.</text>
</comment>
<comment type="similarity">
    <text evidence="7">Belongs to the small GTPase superfamily. Rab family.</text>
</comment>
<protein>
    <recommendedName>
        <fullName>Ras-related protein Rab-21</fullName>
        <ecNumber evidence="2">3.6.5.2</ecNumber>
    </recommendedName>
</protein>
<sequence>MAAAGGGGAAAGRTYSFKVVLLGEGCVGKTSLVLRYCENKFNDKHITTLQASFLTKKLNIGGKRVNLAIWDTAGQERFHALGPIYYRDSNGAILVYDITDEDSFQKVKNWVKELRKMLGNEICLCIVGNKVDLEKERHVSIQEAESYAESVGAKHYHTSAKQNKGIEELFLDLCKRMIETAQVDERAKGNGSSQPGAARRGVQIIDDEPQAQSVGGGCCSSG</sequence>
<reference key="1">
    <citation type="submission" date="2006-06" db="EMBL/GenBank/DDBJ databases">
        <authorList>
            <consortium name="NIH - Mammalian Gene Collection (MGC) project"/>
        </authorList>
    </citation>
    <scope>NUCLEOTIDE SEQUENCE [LARGE SCALE MRNA]</scope>
    <source>
        <strain>Hereford</strain>
        <tissue>Uterus</tissue>
    </source>
</reference>
<accession>Q17R06</accession>
<gene>
    <name type="primary">RAB21</name>
</gene>
<organism>
    <name type="scientific">Bos taurus</name>
    <name type="common">Bovine</name>
    <dbReference type="NCBI Taxonomy" id="9913"/>
    <lineage>
        <taxon>Eukaryota</taxon>
        <taxon>Metazoa</taxon>
        <taxon>Chordata</taxon>
        <taxon>Craniata</taxon>
        <taxon>Vertebrata</taxon>
        <taxon>Euteleostomi</taxon>
        <taxon>Mammalia</taxon>
        <taxon>Eutheria</taxon>
        <taxon>Laurasiatheria</taxon>
        <taxon>Artiodactyla</taxon>
        <taxon>Ruminantia</taxon>
        <taxon>Pecora</taxon>
        <taxon>Bovidae</taxon>
        <taxon>Bovinae</taxon>
        <taxon>Bos</taxon>
    </lineage>
</organism>
<proteinExistence type="evidence at transcript level"/>
<name>RAB21_BOVIN</name>
<evidence type="ECO:0000250" key="1"/>
<evidence type="ECO:0000250" key="2">
    <source>
        <dbReference type="UniProtKB" id="P20339"/>
    </source>
</evidence>
<evidence type="ECO:0000250" key="3">
    <source>
        <dbReference type="UniProtKB" id="P35282"/>
    </source>
</evidence>
<evidence type="ECO:0000250" key="4">
    <source>
        <dbReference type="UniProtKB" id="Q6AXT5"/>
    </source>
</evidence>
<evidence type="ECO:0000250" key="5">
    <source>
        <dbReference type="UniProtKB" id="Q9UL25"/>
    </source>
</evidence>
<evidence type="ECO:0000255" key="6"/>
<evidence type="ECO:0000305" key="7"/>
<dbReference type="EC" id="3.6.5.2" evidence="2"/>
<dbReference type="EMBL" id="BC118088">
    <property type="protein sequence ID" value="AAI18089.1"/>
    <property type="molecule type" value="mRNA"/>
</dbReference>
<dbReference type="RefSeq" id="NP_001068785.1">
    <property type="nucleotide sequence ID" value="NM_001075317.1"/>
</dbReference>
<dbReference type="SMR" id="Q17R06"/>
<dbReference type="FunCoup" id="Q17R06">
    <property type="interactions" value="3430"/>
</dbReference>
<dbReference type="STRING" id="9913.ENSBTAP00000062568"/>
<dbReference type="PaxDb" id="9913-ENSBTAP00000025807"/>
<dbReference type="PeptideAtlas" id="Q17R06"/>
<dbReference type="Ensembl" id="ENSBTAT00000086555.1">
    <property type="protein sequence ID" value="ENSBTAP00000062568.1"/>
    <property type="gene ID" value="ENSBTAG00000053598.1"/>
</dbReference>
<dbReference type="GeneID" id="507488"/>
<dbReference type="KEGG" id="bta:507488"/>
<dbReference type="CTD" id="23011"/>
<dbReference type="VEuPathDB" id="HostDB:ENSBTAG00000053598"/>
<dbReference type="eggNOG" id="KOG0088">
    <property type="taxonomic scope" value="Eukaryota"/>
</dbReference>
<dbReference type="GeneTree" id="ENSGT00940000156786"/>
<dbReference type="InParanoid" id="Q17R06"/>
<dbReference type="OMA" id="NDEQHRN"/>
<dbReference type="OrthoDB" id="63533at2759"/>
<dbReference type="Reactome" id="R-BTA-8873719">
    <property type="pathway name" value="RAB geranylgeranylation"/>
</dbReference>
<dbReference type="Reactome" id="R-BTA-8876198">
    <property type="pathway name" value="RAB GEFs exchange GTP for GDP on RABs"/>
</dbReference>
<dbReference type="Proteomes" id="UP000009136">
    <property type="component" value="Chromosome 5"/>
</dbReference>
<dbReference type="Bgee" id="ENSBTAG00000053598">
    <property type="expression patterns" value="Expressed in oocyte and 103 other cell types or tissues"/>
</dbReference>
<dbReference type="GO" id="GO:1904115">
    <property type="term" value="C:axon cytoplasm"/>
    <property type="evidence" value="ECO:0007669"/>
    <property type="project" value="GOC"/>
</dbReference>
<dbReference type="GO" id="GO:0032154">
    <property type="term" value="C:cleavage furrow"/>
    <property type="evidence" value="ECO:0007669"/>
    <property type="project" value="UniProtKB-SubCell"/>
</dbReference>
<dbReference type="GO" id="GO:0098559">
    <property type="term" value="C:cytoplasmic side of early endosome membrane"/>
    <property type="evidence" value="ECO:0007669"/>
    <property type="project" value="Ensembl"/>
</dbReference>
<dbReference type="GO" id="GO:0009898">
    <property type="term" value="C:cytoplasmic side of plasma membrane"/>
    <property type="evidence" value="ECO:0007669"/>
    <property type="project" value="Ensembl"/>
</dbReference>
<dbReference type="GO" id="GO:0005769">
    <property type="term" value="C:early endosome"/>
    <property type="evidence" value="ECO:0000318"/>
    <property type="project" value="GO_Central"/>
</dbReference>
<dbReference type="GO" id="GO:0012505">
    <property type="term" value="C:endomembrane system"/>
    <property type="evidence" value="ECO:0000318"/>
    <property type="project" value="GO_Central"/>
</dbReference>
<dbReference type="GO" id="GO:0005789">
    <property type="term" value="C:endoplasmic reticulum membrane"/>
    <property type="evidence" value="ECO:0007669"/>
    <property type="project" value="UniProtKB-SubCell"/>
</dbReference>
<dbReference type="GO" id="GO:0032580">
    <property type="term" value="C:Golgi cisterna membrane"/>
    <property type="evidence" value="ECO:0007669"/>
    <property type="project" value="Ensembl"/>
</dbReference>
<dbReference type="GO" id="GO:0000139">
    <property type="term" value="C:Golgi membrane"/>
    <property type="evidence" value="ECO:0007669"/>
    <property type="project" value="UniProtKB-SubCell"/>
</dbReference>
<dbReference type="GO" id="GO:0005802">
    <property type="term" value="C:trans-Golgi network"/>
    <property type="evidence" value="ECO:0007669"/>
    <property type="project" value="Ensembl"/>
</dbReference>
<dbReference type="GO" id="GO:0019003">
    <property type="term" value="F:GDP binding"/>
    <property type="evidence" value="ECO:0000250"/>
    <property type="project" value="UniProtKB"/>
</dbReference>
<dbReference type="GO" id="GO:0005525">
    <property type="term" value="F:GTP binding"/>
    <property type="evidence" value="ECO:0000250"/>
    <property type="project" value="UniProtKB"/>
</dbReference>
<dbReference type="GO" id="GO:0003924">
    <property type="term" value="F:GTPase activity"/>
    <property type="evidence" value="ECO:0000250"/>
    <property type="project" value="UniProtKB"/>
</dbReference>
<dbReference type="GO" id="GO:0008089">
    <property type="term" value="P:anterograde axonal transport"/>
    <property type="evidence" value="ECO:0007669"/>
    <property type="project" value="Ensembl"/>
</dbReference>
<dbReference type="GO" id="GO:0006886">
    <property type="term" value="P:intracellular protein transport"/>
    <property type="evidence" value="ECO:0000318"/>
    <property type="project" value="GO_Central"/>
</dbReference>
<dbReference type="GO" id="GO:0050775">
    <property type="term" value="P:positive regulation of dendrite morphogenesis"/>
    <property type="evidence" value="ECO:0007669"/>
    <property type="project" value="Ensembl"/>
</dbReference>
<dbReference type="GO" id="GO:2000643">
    <property type="term" value="P:positive regulation of early endosome to late endosome transport"/>
    <property type="evidence" value="ECO:0007669"/>
    <property type="project" value="Ensembl"/>
</dbReference>
<dbReference type="GO" id="GO:0048260">
    <property type="term" value="P:positive regulation of receptor-mediated endocytosis"/>
    <property type="evidence" value="ECO:0007669"/>
    <property type="project" value="Ensembl"/>
</dbReference>
<dbReference type="GO" id="GO:0050821">
    <property type="term" value="P:protein stabilization"/>
    <property type="evidence" value="ECO:0000250"/>
    <property type="project" value="UniProtKB"/>
</dbReference>
<dbReference type="GO" id="GO:0032482">
    <property type="term" value="P:Rab protein signal transduction"/>
    <property type="evidence" value="ECO:0007669"/>
    <property type="project" value="InterPro"/>
</dbReference>
<dbReference type="GO" id="GO:0017157">
    <property type="term" value="P:regulation of exocytosis"/>
    <property type="evidence" value="ECO:0007669"/>
    <property type="project" value="Ensembl"/>
</dbReference>
<dbReference type="CDD" id="cd04123">
    <property type="entry name" value="Rab21"/>
    <property type="match status" value="1"/>
</dbReference>
<dbReference type="FunFam" id="3.40.50.300:FF:000550">
    <property type="entry name" value="ras-related protein Rab-21"/>
    <property type="match status" value="1"/>
</dbReference>
<dbReference type="Gene3D" id="3.40.50.300">
    <property type="entry name" value="P-loop containing nucleotide triphosphate hydrolases"/>
    <property type="match status" value="1"/>
</dbReference>
<dbReference type="InterPro" id="IPR027417">
    <property type="entry name" value="P-loop_NTPase"/>
</dbReference>
<dbReference type="InterPro" id="IPR041833">
    <property type="entry name" value="Rab21"/>
</dbReference>
<dbReference type="InterPro" id="IPR005225">
    <property type="entry name" value="Small_GTP-bd"/>
</dbReference>
<dbReference type="InterPro" id="IPR001806">
    <property type="entry name" value="Small_GTPase"/>
</dbReference>
<dbReference type="NCBIfam" id="TIGR00231">
    <property type="entry name" value="small_GTP"/>
    <property type="match status" value="1"/>
</dbReference>
<dbReference type="PANTHER" id="PTHR47978">
    <property type="match status" value="1"/>
</dbReference>
<dbReference type="Pfam" id="PF00071">
    <property type="entry name" value="Ras"/>
    <property type="match status" value="1"/>
</dbReference>
<dbReference type="PRINTS" id="PR00449">
    <property type="entry name" value="RASTRNSFRMNG"/>
</dbReference>
<dbReference type="SMART" id="SM00175">
    <property type="entry name" value="RAB"/>
    <property type="match status" value="1"/>
</dbReference>
<dbReference type="SMART" id="SM00176">
    <property type="entry name" value="RAN"/>
    <property type="match status" value="1"/>
</dbReference>
<dbReference type="SMART" id="SM00173">
    <property type="entry name" value="RAS"/>
    <property type="match status" value="1"/>
</dbReference>
<dbReference type="SMART" id="SM00174">
    <property type="entry name" value="RHO"/>
    <property type="match status" value="1"/>
</dbReference>
<dbReference type="SUPFAM" id="SSF52540">
    <property type="entry name" value="P-loop containing nucleoside triphosphate hydrolases"/>
    <property type="match status" value="1"/>
</dbReference>
<dbReference type="PROSITE" id="PS51419">
    <property type="entry name" value="RAB"/>
    <property type="match status" value="1"/>
</dbReference>
<feature type="initiator methionine" description="Removed" evidence="5">
    <location>
        <position position="1"/>
    </location>
</feature>
<feature type="chain" id="PRO_0000283074" description="Ras-related protein Rab-21">
    <location>
        <begin position="2"/>
        <end position="219"/>
    </location>
</feature>
<feature type="propeptide" id="PRO_0000370766" description="Removed in mature form" evidence="6">
    <location>
        <begin position="220"/>
        <end position="222"/>
    </location>
</feature>
<feature type="short sequence motif" description="Switch 1" evidence="5">
    <location>
        <begin position="40"/>
        <end position="53"/>
    </location>
</feature>
<feature type="short sequence motif" description="Switch 2" evidence="5">
    <location>
        <begin position="73"/>
        <end position="91"/>
    </location>
</feature>
<feature type="binding site" evidence="5">
    <location>
        <position position="25"/>
    </location>
    <ligand>
        <name>GTP</name>
        <dbReference type="ChEBI" id="CHEBI:37565"/>
    </ligand>
</feature>
<feature type="binding site" evidence="5">
    <location>
        <position position="28"/>
    </location>
    <ligand>
        <name>GTP</name>
        <dbReference type="ChEBI" id="CHEBI:37565"/>
    </ligand>
</feature>
<feature type="binding site" evidence="5">
    <location>
        <position position="29"/>
    </location>
    <ligand>
        <name>GTP</name>
        <dbReference type="ChEBI" id="CHEBI:37565"/>
    </ligand>
</feature>
<feature type="binding site" evidence="5">
    <location>
        <position position="30"/>
    </location>
    <ligand>
        <name>GTP</name>
        <dbReference type="ChEBI" id="CHEBI:37565"/>
    </ligand>
</feature>
<feature type="binding site" evidence="5">
    <location>
        <position position="30"/>
    </location>
    <ligand>
        <name>Mg(2+)</name>
        <dbReference type="ChEBI" id="CHEBI:18420"/>
    </ligand>
</feature>
<feature type="binding site" evidence="5">
    <location>
        <position position="31"/>
    </location>
    <ligand>
        <name>GTP</name>
        <dbReference type="ChEBI" id="CHEBI:37565"/>
    </ligand>
</feature>
<feature type="binding site" evidence="5">
    <location>
        <position position="42"/>
    </location>
    <ligand>
        <name>GTP</name>
        <dbReference type="ChEBI" id="CHEBI:37565"/>
    </ligand>
</feature>
<feature type="binding site" evidence="5">
    <location>
        <position position="43"/>
    </location>
    <ligand>
        <name>GTP</name>
        <dbReference type="ChEBI" id="CHEBI:37565"/>
    </ligand>
</feature>
<feature type="binding site" evidence="5">
    <location>
        <position position="45"/>
    </location>
    <ligand>
        <name>GTP</name>
        <dbReference type="ChEBI" id="CHEBI:37565"/>
    </ligand>
</feature>
<feature type="binding site" evidence="5">
    <location>
        <position position="47"/>
    </location>
    <ligand>
        <name>GTP</name>
        <dbReference type="ChEBI" id="CHEBI:37565"/>
    </ligand>
</feature>
<feature type="binding site" evidence="5">
    <location>
        <position position="48"/>
    </location>
    <ligand>
        <name>GTP</name>
        <dbReference type="ChEBI" id="CHEBI:37565"/>
    </ligand>
</feature>
<feature type="binding site" evidence="5">
    <location>
        <position position="48"/>
    </location>
    <ligand>
        <name>Mg(2+)</name>
        <dbReference type="ChEBI" id="CHEBI:18420"/>
    </ligand>
</feature>
<feature type="binding site" evidence="5">
    <location>
        <position position="71"/>
    </location>
    <ligand>
        <name>Mg(2+)</name>
        <dbReference type="ChEBI" id="CHEBI:18420"/>
    </ligand>
</feature>
<feature type="binding site" evidence="5">
    <location>
        <position position="74"/>
    </location>
    <ligand>
        <name>GTP</name>
        <dbReference type="ChEBI" id="CHEBI:37565"/>
    </ligand>
</feature>
<feature type="binding site" evidence="5">
    <location>
        <position position="129"/>
    </location>
    <ligand>
        <name>GTP</name>
        <dbReference type="ChEBI" id="CHEBI:37565"/>
    </ligand>
</feature>
<feature type="binding site" evidence="5">
    <location>
        <position position="130"/>
    </location>
    <ligand>
        <name>GTP</name>
        <dbReference type="ChEBI" id="CHEBI:37565"/>
    </ligand>
</feature>
<feature type="binding site" evidence="5">
    <location>
        <position position="132"/>
    </location>
    <ligand>
        <name>GTP</name>
        <dbReference type="ChEBI" id="CHEBI:37565"/>
    </ligand>
</feature>
<feature type="binding site" evidence="5">
    <location>
        <position position="160"/>
    </location>
    <ligand>
        <name>GTP</name>
        <dbReference type="ChEBI" id="CHEBI:37565"/>
    </ligand>
</feature>
<feature type="binding site" evidence="5">
    <location>
        <position position="161"/>
    </location>
    <ligand>
        <name>GTP</name>
        <dbReference type="ChEBI" id="CHEBI:37565"/>
    </ligand>
</feature>
<feature type="modified residue" description="N-acetylalanine" evidence="5">
    <location>
        <position position="2"/>
    </location>
</feature>
<feature type="modified residue" description="Cysteine methyl ester" evidence="6">
    <location>
        <position position="219"/>
    </location>
</feature>
<feature type="lipid moiety-binding region" description="S-geranylgeranyl cysteine" evidence="1">
    <location>
        <position position="218"/>
    </location>
</feature>
<feature type="lipid moiety-binding region" description="S-geranylgeranyl cysteine" evidence="1">
    <location>
        <position position="219"/>
    </location>
</feature>